<feature type="chain" id="PRO_1000213310" description="Histidinol-phosphate aminotransferase">
    <location>
        <begin position="1"/>
        <end position="357"/>
    </location>
</feature>
<feature type="modified residue" description="N6-(pyridoxal phosphate)lysine" evidence="1">
    <location>
        <position position="212"/>
    </location>
</feature>
<comment type="catalytic activity">
    <reaction evidence="1">
        <text>L-histidinol phosphate + 2-oxoglutarate = 3-(imidazol-4-yl)-2-oxopropyl phosphate + L-glutamate</text>
        <dbReference type="Rhea" id="RHEA:23744"/>
        <dbReference type="ChEBI" id="CHEBI:16810"/>
        <dbReference type="ChEBI" id="CHEBI:29985"/>
        <dbReference type="ChEBI" id="CHEBI:57766"/>
        <dbReference type="ChEBI" id="CHEBI:57980"/>
        <dbReference type="EC" id="2.6.1.9"/>
    </reaction>
</comment>
<comment type="cofactor">
    <cofactor evidence="1">
        <name>pyridoxal 5'-phosphate</name>
        <dbReference type="ChEBI" id="CHEBI:597326"/>
    </cofactor>
</comment>
<comment type="pathway">
    <text evidence="1">Amino-acid biosynthesis; L-histidine biosynthesis; L-histidine from 5-phospho-alpha-D-ribose 1-diphosphate: step 7/9.</text>
</comment>
<comment type="subunit">
    <text evidence="1">Homodimer.</text>
</comment>
<comment type="similarity">
    <text evidence="1">Belongs to the class-II pyridoxal-phosphate-dependent aminotransferase family. Histidinol-phosphate aminotransferase subfamily.</text>
</comment>
<name>HIS8_PECCP</name>
<keyword id="KW-0028">Amino-acid biosynthesis</keyword>
<keyword id="KW-0032">Aminotransferase</keyword>
<keyword id="KW-0368">Histidine biosynthesis</keyword>
<keyword id="KW-0663">Pyridoxal phosphate</keyword>
<keyword id="KW-0808">Transferase</keyword>
<accession>C6DF75</accession>
<organism>
    <name type="scientific">Pectobacterium carotovorum subsp. carotovorum (strain PC1)</name>
    <dbReference type="NCBI Taxonomy" id="561230"/>
    <lineage>
        <taxon>Bacteria</taxon>
        <taxon>Pseudomonadati</taxon>
        <taxon>Pseudomonadota</taxon>
        <taxon>Gammaproteobacteria</taxon>
        <taxon>Enterobacterales</taxon>
        <taxon>Pectobacteriaceae</taxon>
        <taxon>Pectobacterium</taxon>
    </lineage>
</organism>
<dbReference type="EC" id="2.6.1.9" evidence="1"/>
<dbReference type="EMBL" id="CP001657">
    <property type="protein sequence ID" value="ACT12784.1"/>
    <property type="molecule type" value="Genomic_DNA"/>
</dbReference>
<dbReference type="RefSeq" id="WP_015839994.1">
    <property type="nucleotide sequence ID" value="NC_012917.1"/>
</dbReference>
<dbReference type="SMR" id="C6DF75"/>
<dbReference type="STRING" id="561230.PC1_1743"/>
<dbReference type="KEGG" id="pct:PC1_1743"/>
<dbReference type="eggNOG" id="COG0079">
    <property type="taxonomic scope" value="Bacteria"/>
</dbReference>
<dbReference type="HOGENOM" id="CLU_017584_3_1_6"/>
<dbReference type="OrthoDB" id="9813612at2"/>
<dbReference type="UniPathway" id="UPA00031">
    <property type="reaction ID" value="UER00012"/>
</dbReference>
<dbReference type="Proteomes" id="UP000002736">
    <property type="component" value="Chromosome"/>
</dbReference>
<dbReference type="GO" id="GO:0004400">
    <property type="term" value="F:histidinol-phosphate transaminase activity"/>
    <property type="evidence" value="ECO:0007669"/>
    <property type="project" value="UniProtKB-UniRule"/>
</dbReference>
<dbReference type="GO" id="GO:0030170">
    <property type="term" value="F:pyridoxal phosphate binding"/>
    <property type="evidence" value="ECO:0007669"/>
    <property type="project" value="InterPro"/>
</dbReference>
<dbReference type="GO" id="GO:0000105">
    <property type="term" value="P:L-histidine biosynthetic process"/>
    <property type="evidence" value="ECO:0007669"/>
    <property type="project" value="UniProtKB-UniRule"/>
</dbReference>
<dbReference type="CDD" id="cd00609">
    <property type="entry name" value="AAT_like"/>
    <property type="match status" value="1"/>
</dbReference>
<dbReference type="Gene3D" id="3.90.1150.10">
    <property type="entry name" value="Aspartate Aminotransferase, domain 1"/>
    <property type="match status" value="1"/>
</dbReference>
<dbReference type="Gene3D" id="3.40.640.10">
    <property type="entry name" value="Type I PLP-dependent aspartate aminotransferase-like (Major domain)"/>
    <property type="match status" value="1"/>
</dbReference>
<dbReference type="HAMAP" id="MF_01023">
    <property type="entry name" value="HisC_aminotrans_2"/>
    <property type="match status" value="1"/>
</dbReference>
<dbReference type="InterPro" id="IPR001917">
    <property type="entry name" value="Aminotrans_II_pyridoxalP_BS"/>
</dbReference>
<dbReference type="InterPro" id="IPR004839">
    <property type="entry name" value="Aminotransferase_I/II_large"/>
</dbReference>
<dbReference type="InterPro" id="IPR005861">
    <property type="entry name" value="HisP_aminotrans"/>
</dbReference>
<dbReference type="InterPro" id="IPR015424">
    <property type="entry name" value="PyrdxlP-dep_Trfase"/>
</dbReference>
<dbReference type="InterPro" id="IPR015421">
    <property type="entry name" value="PyrdxlP-dep_Trfase_major"/>
</dbReference>
<dbReference type="InterPro" id="IPR015422">
    <property type="entry name" value="PyrdxlP-dep_Trfase_small"/>
</dbReference>
<dbReference type="NCBIfam" id="TIGR01141">
    <property type="entry name" value="hisC"/>
    <property type="match status" value="1"/>
</dbReference>
<dbReference type="PANTHER" id="PTHR42885:SF2">
    <property type="entry name" value="HISTIDINOL-PHOSPHATE AMINOTRANSFERASE"/>
    <property type="match status" value="1"/>
</dbReference>
<dbReference type="PANTHER" id="PTHR42885">
    <property type="entry name" value="HISTIDINOL-PHOSPHATE AMINOTRANSFERASE-RELATED"/>
    <property type="match status" value="1"/>
</dbReference>
<dbReference type="Pfam" id="PF00155">
    <property type="entry name" value="Aminotran_1_2"/>
    <property type="match status" value="1"/>
</dbReference>
<dbReference type="SUPFAM" id="SSF53383">
    <property type="entry name" value="PLP-dependent transferases"/>
    <property type="match status" value="1"/>
</dbReference>
<dbReference type="PROSITE" id="PS00599">
    <property type="entry name" value="AA_TRANSFER_CLASS_2"/>
    <property type="match status" value="1"/>
</dbReference>
<protein>
    <recommendedName>
        <fullName evidence="1">Histidinol-phosphate aminotransferase</fullName>
        <ecNumber evidence="1">2.6.1.9</ecNumber>
    </recommendedName>
    <alternativeName>
        <fullName evidence="1">Imidazole acetol-phosphate transaminase</fullName>
    </alternativeName>
</protein>
<gene>
    <name evidence="1" type="primary">hisC</name>
    <name type="ordered locus">PC1_1743</name>
</gene>
<proteinExistence type="inferred from homology"/>
<sequence length="357" mass="39407">MSNIEQLARANVRALTPYQSARRLGGNGDVWLNANEYPEAPAFQLTLQTLNRYPECQPVQVINRYAEYAGVQPEQVLVSRGADEGIELLIRAFCEPGKDAILFCPPTYGMYAVSAETFGVERRTAASKADWQLDLESIEAQLDGTKVIYVCSPNNPTGNLIAREDLRQLLTMAQGNALVVIDEAYIEFCPQATTAVWLDEFPHLVILRTLSKAFSLAGLRCGFTLANPEVIQLLLKVIAPYPLSTPVADIAAQALSREGIAKMKANVEEITSARRWLSDALKDIPCIEEVFPSESNYLLVRFTASPSVFKTLWDQGIILRDQNKQPSLAGCLRITIGNRYECERVVAALQSLPGINA</sequence>
<reference key="1">
    <citation type="submission" date="2009-07" db="EMBL/GenBank/DDBJ databases">
        <title>Complete sequence of Pectobacterium carotovorum subsp. carotovorum PC1.</title>
        <authorList>
            <consortium name="US DOE Joint Genome Institute"/>
            <person name="Lucas S."/>
            <person name="Copeland A."/>
            <person name="Lapidus A."/>
            <person name="Glavina del Rio T."/>
            <person name="Tice H."/>
            <person name="Bruce D."/>
            <person name="Goodwin L."/>
            <person name="Pitluck S."/>
            <person name="Munk A.C."/>
            <person name="Brettin T."/>
            <person name="Detter J.C."/>
            <person name="Han C."/>
            <person name="Tapia R."/>
            <person name="Larimer F."/>
            <person name="Land M."/>
            <person name="Hauser L."/>
            <person name="Kyrpides N."/>
            <person name="Mikhailova N."/>
            <person name="Balakrishnan V."/>
            <person name="Glasner J."/>
            <person name="Perna N.T."/>
        </authorList>
    </citation>
    <scope>NUCLEOTIDE SEQUENCE [LARGE SCALE GENOMIC DNA]</scope>
    <source>
        <strain>PC1</strain>
    </source>
</reference>
<evidence type="ECO:0000255" key="1">
    <source>
        <dbReference type="HAMAP-Rule" id="MF_01023"/>
    </source>
</evidence>